<dbReference type="EMBL" id="AF157706">
    <property type="protein sequence ID" value="AAD49619.1"/>
    <property type="molecule type" value="Genomic_DNA"/>
</dbReference>
<dbReference type="EMBL" id="AF157706">
    <property type="protein sequence ID" value="AAD49687.1"/>
    <property type="molecule type" value="Genomic_DNA"/>
</dbReference>
<dbReference type="RefSeq" id="NP_050181.1">
    <property type="nucleotide sequence ID" value="NC_000898.1"/>
</dbReference>
<dbReference type="RefSeq" id="NP_050278.1">
    <property type="nucleotide sequence ID" value="NC_000898.1"/>
</dbReference>
<dbReference type="DNASU" id="1497003"/>
<dbReference type="GeneID" id="1497003"/>
<dbReference type="GeneID" id="1497099"/>
<dbReference type="KEGG" id="vg:1497003"/>
<dbReference type="KEGG" id="vg:1497099"/>
<dbReference type="Proteomes" id="UP000006930">
    <property type="component" value="Segment"/>
</dbReference>
<protein>
    <recommendedName>
        <fullName>Protein B3</fullName>
    </recommendedName>
</protein>
<organismHost>
    <name type="scientific">Homo sapiens</name>
    <name type="common">Human</name>
    <dbReference type="NCBI Taxonomy" id="9606"/>
</organismHost>
<organism>
    <name type="scientific">Human herpesvirus 6B (strain Z29)</name>
    <name type="common">HHV-6 variant B</name>
    <name type="synonym">Human B lymphotropic virus</name>
    <dbReference type="NCBI Taxonomy" id="36351"/>
    <lineage>
        <taxon>Viruses</taxon>
        <taxon>Duplodnaviria</taxon>
        <taxon>Heunggongvirae</taxon>
        <taxon>Peploviricota</taxon>
        <taxon>Herviviricetes</taxon>
        <taxon>Herpesvirales</taxon>
        <taxon>Orthoherpesviridae</taxon>
        <taxon>Betaherpesvirinae</taxon>
        <taxon>Roseolovirus</taxon>
        <taxon>Roseolovirus humanbeta6b</taxon>
        <taxon>Human herpesvirus 6B</taxon>
    </lineage>
</organism>
<name>B3_HHV6Z</name>
<reference key="1">
    <citation type="journal article" date="1999" name="J. Virol.">
        <title>Human herpesvirus 6B genome sequence: coding content and comparison with human herpesvirus 6A.</title>
        <authorList>
            <person name="Dominguez G."/>
            <person name="Dambaugh T.R."/>
            <person name="Stamey F.R."/>
            <person name="Dewhurst S."/>
            <person name="Inoue N."/>
            <person name="Pellett P.E."/>
        </authorList>
    </citation>
    <scope>NUCLEOTIDE SEQUENCE [LARGE SCALE GENOMIC DNA]</scope>
</reference>
<sequence length="59" mass="6655">MSIRLRVCVGCVYVRVTVSLPAFNPMRNKIGECTQSHTMCLRAVLLTPHNKKKKHTSCP</sequence>
<accession>Q9PX43</accession>
<feature type="chain" id="PRO_0000408394" description="Protein B3">
    <location>
        <begin position="1"/>
        <end position="59"/>
    </location>
</feature>
<gene>
    <name type="primary">B3</name>
</gene>
<keyword id="KW-1185">Reference proteome</keyword>
<proteinExistence type="predicted"/>